<comment type="function">
    <text evidence="1">Catalyzes the radical-mediated insertion of two sulfur atoms into the C-6 and C-8 positions of the octanoyl moiety bound to the lipoyl domains of lipoate-dependent enzymes, thereby converting the octanoylated domains into lipoylated derivatives.</text>
</comment>
<comment type="catalytic activity">
    <reaction evidence="1">
        <text>[[Fe-S] cluster scaffold protein carrying a second [4Fe-4S](2+) cluster] + N(6)-octanoyl-L-lysyl-[protein] + 2 oxidized [2Fe-2S]-[ferredoxin] + 2 S-adenosyl-L-methionine + 4 H(+) = [[Fe-S] cluster scaffold protein] + N(6)-[(R)-dihydrolipoyl]-L-lysyl-[protein] + 4 Fe(3+) + 2 hydrogen sulfide + 2 5'-deoxyadenosine + 2 L-methionine + 2 reduced [2Fe-2S]-[ferredoxin]</text>
        <dbReference type="Rhea" id="RHEA:16585"/>
        <dbReference type="Rhea" id="RHEA-COMP:9928"/>
        <dbReference type="Rhea" id="RHEA-COMP:10000"/>
        <dbReference type="Rhea" id="RHEA-COMP:10001"/>
        <dbReference type="Rhea" id="RHEA-COMP:10475"/>
        <dbReference type="Rhea" id="RHEA-COMP:14568"/>
        <dbReference type="Rhea" id="RHEA-COMP:14569"/>
        <dbReference type="ChEBI" id="CHEBI:15378"/>
        <dbReference type="ChEBI" id="CHEBI:17319"/>
        <dbReference type="ChEBI" id="CHEBI:29034"/>
        <dbReference type="ChEBI" id="CHEBI:29919"/>
        <dbReference type="ChEBI" id="CHEBI:33722"/>
        <dbReference type="ChEBI" id="CHEBI:33737"/>
        <dbReference type="ChEBI" id="CHEBI:33738"/>
        <dbReference type="ChEBI" id="CHEBI:57844"/>
        <dbReference type="ChEBI" id="CHEBI:59789"/>
        <dbReference type="ChEBI" id="CHEBI:78809"/>
        <dbReference type="ChEBI" id="CHEBI:83100"/>
        <dbReference type="EC" id="2.8.1.8"/>
    </reaction>
</comment>
<comment type="cofactor">
    <cofactor evidence="1">
        <name>[4Fe-4S] cluster</name>
        <dbReference type="ChEBI" id="CHEBI:49883"/>
    </cofactor>
    <text evidence="1">Binds 2 [4Fe-4S] clusters per subunit. One cluster is coordinated with 3 cysteines and an exchangeable S-adenosyl-L-methionine.</text>
</comment>
<comment type="pathway">
    <text evidence="1">Protein modification; protein lipoylation via endogenous pathway; protein N(6)-(lipoyl)lysine from octanoyl-[acyl-carrier-protein]: step 2/2.</text>
</comment>
<comment type="subcellular location">
    <subcellularLocation>
        <location evidence="1">Cytoplasm</location>
    </subcellularLocation>
</comment>
<comment type="similarity">
    <text evidence="1">Belongs to the radical SAM superfamily. Lipoyl synthase family.</text>
</comment>
<name>LIPA_MYCSK</name>
<dbReference type="EC" id="2.8.1.8" evidence="1"/>
<dbReference type="EMBL" id="CP000518">
    <property type="protein sequence ID" value="ABL92572.1"/>
    <property type="molecule type" value="Genomic_DNA"/>
</dbReference>
<dbReference type="SMR" id="A1UIB4"/>
<dbReference type="STRING" id="189918.Mkms_3378"/>
<dbReference type="KEGG" id="mkm:Mkms_3378"/>
<dbReference type="HOGENOM" id="CLU_033144_2_1_11"/>
<dbReference type="OrthoDB" id="9787898at2"/>
<dbReference type="UniPathway" id="UPA00538">
    <property type="reaction ID" value="UER00593"/>
</dbReference>
<dbReference type="GO" id="GO:0005737">
    <property type="term" value="C:cytoplasm"/>
    <property type="evidence" value="ECO:0007669"/>
    <property type="project" value="UniProtKB-SubCell"/>
</dbReference>
<dbReference type="GO" id="GO:0051539">
    <property type="term" value="F:4 iron, 4 sulfur cluster binding"/>
    <property type="evidence" value="ECO:0007669"/>
    <property type="project" value="UniProtKB-UniRule"/>
</dbReference>
<dbReference type="GO" id="GO:0016992">
    <property type="term" value="F:lipoate synthase activity"/>
    <property type="evidence" value="ECO:0007669"/>
    <property type="project" value="UniProtKB-UniRule"/>
</dbReference>
<dbReference type="GO" id="GO:0046872">
    <property type="term" value="F:metal ion binding"/>
    <property type="evidence" value="ECO:0007669"/>
    <property type="project" value="UniProtKB-KW"/>
</dbReference>
<dbReference type="CDD" id="cd01335">
    <property type="entry name" value="Radical_SAM"/>
    <property type="match status" value="1"/>
</dbReference>
<dbReference type="FunFam" id="3.20.20.70:FF:000116">
    <property type="entry name" value="Lipoyl synthase"/>
    <property type="match status" value="1"/>
</dbReference>
<dbReference type="Gene3D" id="3.20.20.70">
    <property type="entry name" value="Aldolase class I"/>
    <property type="match status" value="1"/>
</dbReference>
<dbReference type="HAMAP" id="MF_00206">
    <property type="entry name" value="Lipoyl_synth"/>
    <property type="match status" value="1"/>
</dbReference>
<dbReference type="InterPro" id="IPR013785">
    <property type="entry name" value="Aldolase_TIM"/>
</dbReference>
<dbReference type="InterPro" id="IPR006638">
    <property type="entry name" value="Elp3/MiaA/NifB-like_rSAM"/>
</dbReference>
<dbReference type="InterPro" id="IPR031691">
    <property type="entry name" value="LIAS_N"/>
</dbReference>
<dbReference type="InterPro" id="IPR003698">
    <property type="entry name" value="Lipoyl_synth"/>
</dbReference>
<dbReference type="InterPro" id="IPR007197">
    <property type="entry name" value="rSAM"/>
</dbReference>
<dbReference type="NCBIfam" id="TIGR00510">
    <property type="entry name" value="lipA"/>
    <property type="match status" value="1"/>
</dbReference>
<dbReference type="NCBIfam" id="NF004019">
    <property type="entry name" value="PRK05481.1"/>
    <property type="match status" value="1"/>
</dbReference>
<dbReference type="NCBIfam" id="NF009544">
    <property type="entry name" value="PRK12928.1"/>
    <property type="match status" value="1"/>
</dbReference>
<dbReference type="PANTHER" id="PTHR10949">
    <property type="entry name" value="LIPOYL SYNTHASE"/>
    <property type="match status" value="1"/>
</dbReference>
<dbReference type="PANTHER" id="PTHR10949:SF0">
    <property type="entry name" value="LIPOYL SYNTHASE, MITOCHONDRIAL"/>
    <property type="match status" value="1"/>
</dbReference>
<dbReference type="Pfam" id="PF16881">
    <property type="entry name" value="LIAS_N"/>
    <property type="match status" value="1"/>
</dbReference>
<dbReference type="Pfam" id="PF04055">
    <property type="entry name" value="Radical_SAM"/>
    <property type="match status" value="1"/>
</dbReference>
<dbReference type="PIRSF" id="PIRSF005963">
    <property type="entry name" value="Lipoyl_synth"/>
    <property type="match status" value="1"/>
</dbReference>
<dbReference type="SFLD" id="SFLDF00271">
    <property type="entry name" value="lipoyl_synthase"/>
    <property type="match status" value="1"/>
</dbReference>
<dbReference type="SFLD" id="SFLDG01058">
    <property type="entry name" value="lipoyl_synthase_like"/>
    <property type="match status" value="1"/>
</dbReference>
<dbReference type="SMART" id="SM00729">
    <property type="entry name" value="Elp3"/>
    <property type="match status" value="1"/>
</dbReference>
<dbReference type="SUPFAM" id="SSF102114">
    <property type="entry name" value="Radical SAM enzymes"/>
    <property type="match status" value="1"/>
</dbReference>
<dbReference type="PROSITE" id="PS51918">
    <property type="entry name" value="RADICAL_SAM"/>
    <property type="match status" value="1"/>
</dbReference>
<gene>
    <name evidence="1" type="primary">lipA</name>
    <name type="ordered locus">Mkms_3378</name>
</gene>
<sequence>MTVTPSGSNGAGSAAPEGRKLLRLEVRNAQTPIERKPPWIKTRARMGPEYKELKSLVKREGLHTVCEEAGCPNIFECWEDREATFLIGGEQCTRRCDFCQIDTGKPSELDRDEPRRVAESVQAMGLRYSTVTGVARDDLPDGGAWLYAETVREIKRLNPNTGVELLIPDFNGDPALLAQVFESRPEVLAHNVETVPRIFKRIRPAFRYERSLAVLTAARDDNLVTKSNLILGMGETPDEVRTALVDLHEAGCDIITITQYLRPSPRHHPVERWVKPEEFVEFAQFAEGLGFAGVLSGPLVRSSYRAGRLYAQAARLKPAATPPVS</sequence>
<proteinExistence type="inferred from homology"/>
<organism>
    <name type="scientific">Mycobacterium sp. (strain KMS)</name>
    <dbReference type="NCBI Taxonomy" id="189918"/>
    <lineage>
        <taxon>Bacteria</taxon>
        <taxon>Bacillati</taxon>
        <taxon>Actinomycetota</taxon>
        <taxon>Actinomycetes</taxon>
        <taxon>Mycobacteriales</taxon>
        <taxon>Mycobacteriaceae</taxon>
        <taxon>Mycobacterium</taxon>
    </lineage>
</organism>
<keyword id="KW-0004">4Fe-4S</keyword>
<keyword id="KW-0963">Cytoplasm</keyword>
<keyword id="KW-0408">Iron</keyword>
<keyword id="KW-0411">Iron-sulfur</keyword>
<keyword id="KW-0479">Metal-binding</keyword>
<keyword id="KW-0949">S-adenosyl-L-methionine</keyword>
<keyword id="KW-0808">Transferase</keyword>
<evidence type="ECO:0000255" key="1">
    <source>
        <dbReference type="HAMAP-Rule" id="MF_00206"/>
    </source>
</evidence>
<evidence type="ECO:0000255" key="2">
    <source>
        <dbReference type="PROSITE-ProRule" id="PRU01266"/>
    </source>
</evidence>
<protein>
    <recommendedName>
        <fullName evidence="1">Lipoyl synthase</fullName>
        <ecNumber evidence="1">2.8.1.8</ecNumber>
    </recommendedName>
    <alternativeName>
        <fullName evidence="1">Lip-syn</fullName>
        <shortName evidence="1">LS</shortName>
    </alternativeName>
    <alternativeName>
        <fullName evidence="1">Lipoate synthase</fullName>
    </alternativeName>
    <alternativeName>
        <fullName evidence="1">Lipoic acid synthase</fullName>
    </alternativeName>
    <alternativeName>
        <fullName evidence="1">Sulfur insertion protein LipA</fullName>
    </alternativeName>
</protein>
<accession>A1UIB4</accession>
<feature type="chain" id="PRO_1000012237" description="Lipoyl synthase">
    <location>
        <begin position="1"/>
        <end position="325"/>
    </location>
</feature>
<feature type="domain" description="Radical SAM core" evidence="2">
    <location>
        <begin position="78"/>
        <end position="292"/>
    </location>
</feature>
<feature type="binding site" evidence="1">
    <location>
        <position position="66"/>
    </location>
    <ligand>
        <name>[4Fe-4S] cluster</name>
        <dbReference type="ChEBI" id="CHEBI:49883"/>
        <label>1</label>
    </ligand>
</feature>
<feature type="binding site" evidence="1">
    <location>
        <position position="71"/>
    </location>
    <ligand>
        <name>[4Fe-4S] cluster</name>
        <dbReference type="ChEBI" id="CHEBI:49883"/>
        <label>1</label>
    </ligand>
</feature>
<feature type="binding site" evidence="1">
    <location>
        <position position="77"/>
    </location>
    <ligand>
        <name>[4Fe-4S] cluster</name>
        <dbReference type="ChEBI" id="CHEBI:49883"/>
        <label>1</label>
    </ligand>
</feature>
<feature type="binding site" evidence="1">
    <location>
        <position position="92"/>
    </location>
    <ligand>
        <name>[4Fe-4S] cluster</name>
        <dbReference type="ChEBI" id="CHEBI:49883"/>
        <label>2</label>
        <note>4Fe-4S-S-AdoMet</note>
    </ligand>
</feature>
<feature type="binding site" evidence="1">
    <location>
        <position position="96"/>
    </location>
    <ligand>
        <name>[4Fe-4S] cluster</name>
        <dbReference type="ChEBI" id="CHEBI:49883"/>
        <label>2</label>
        <note>4Fe-4S-S-AdoMet</note>
    </ligand>
</feature>
<feature type="binding site" evidence="1">
    <location>
        <position position="99"/>
    </location>
    <ligand>
        <name>[4Fe-4S] cluster</name>
        <dbReference type="ChEBI" id="CHEBI:49883"/>
        <label>2</label>
        <note>4Fe-4S-S-AdoMet</note>
    </ligand>
</feature>
<feature type="binding site" evidence="1">
    <location>
        <position position="303"/>
    </location>
    <ligand>
        <name>[4Fe-4S] cluster</name>
        <dbReference type="ChEBI" id="CHEBI:49883"/>
        <label>1</label>
    </ligand>
</feature>
<reference key="1">
    <citation type="submission" date="2006-12" db="EMBL/GenBank/DDBJ databases">
        <title>Complete sequence of chromosome of Mycobacterium sp. KMS.</title>
        <authorList>
            <consortium name="US DOE Joint Genome Institute"/>
            <person name="Copeland A."/>
            <person name="Lucas S."/>
            <person name="Lapidus A."/>
            <person name="Barry K."/>
            <person name="Detter J.C."/>
            <person name="Glavina del Rio T."/>
            <person name="Hammon N."/>
            <person name="Israni S."/>
            <person name="Dalin E."/>
            <person name="Tice H."/>
            <person name="Pitluck S."/>
            <person name="Kiss H."/>
            <person name="Brettin T."/>
            <person name="Bruce D."/>
            <person name="Han C."/>
            <person name="Tapia R."/>
            <person name="Gilna P."/>
            <person name="Schmutz J."/>
            <person name="Larimer F."/>
            <person name="Land M."/>
            <person name="Hauser L."/>
            <person name="Kyrpides N."/>
            <person name="Mikhailova N."/>
            <person name="Miller C.D."/>
            <person name="Richardson P."/>
        </authorList>
    </citation>
    <scope>NUCLEOTIDE SEQUENCE [LARGE SCALE GENOMIC DNA]</scope>
    <source>
        <strain>KMS</strain>
    </source>
</reference>